<gene>
    <name evidence="1" type="primary">ruvB</name>
    <name type="ordered locus">Tola_2711</name>
</gene>
<comment type="function">
    <text evidence="1">The RuvA-RuvB-RuvC complex processes Holliday junction (HJ) DNA during genetic recombination and DNA repair, while the RuvA-RuvB complex plays an important role in the rescue of blocked DNA replication forks via replication fork reversal (RFR). RuvA specifically binds to HJ cruciform DNA, conferring on it an open structure. The RuvB hexamer acts as an ATP-dependent pump, pulling dsDNA into and through the RuvAB complex. RuvB forms 2 homohexamers on either side of HJ DNA bound by 1 or 2 RuvA tetramers; 4 subunits per hexamer contact DNA at a time. Coordinated motions by a converter formed by DNA-disengaged RuvB subunits stimulates ATP hydrolysis and nucleotide exchange. Immobilization of the converter enables RuvB to convert the ATP-contained energy into a lever motion, pulling 2 nucleotides of DNA out of the RuvA tetramer per ATP hydrolyzed, thus driving DNA branch migration. The RuvB motors rotate together with the DNA substrate, which together with the progressing nucleotide cycle form the mechanistic basis for DNA recombination by continuous HJ branch migration. Branch migration allows RuvC to scan DNA until it finds its consensus sequence, where it cleaves and resolves cruciform DNA.</text>
</comment>
<comment type="catalytic activity">
    <reaction evidence="1">
        <text>ATP + H2O = ADP + phosphate + H(+)</text>
        <dbReference type="Rhea" id="RHEA:13065"/>
        <dbReference type="ChEBI" id="CHEBI:15377"/>
        <dbReference type="ChEBI" id="CHEBI:15378"/>
        <dbReference type="ChEBI" id="CHEBI:30616"/>
        <dbReference type="ChEBI" id="CHEBI:43474"/>
        <dbReference type="ChEBI" id="CHEBI:456216"/>
    </reaction>
</comment>
<comment type="subunit">
    <text evidence="1">Homohexamer. Forms an RuvA(8)-RuvB(12)-Holliday junction (HJ) complex. HJ DNA is sandwiched between 2 RuvA tetramers; dsDNA enters through RuvA and exits via RuvB. An RuvB hexamer assembles on each DNA strand where it exits the tetramer. Each RuvB hexamer is contacted by two RuvA subunits (via domain III) on 2 adjacent RuvB subunits; this complex drives branch migration. In the full resolvosome a probable DNA-RuvA(4)-RuvB(12)-RuvC(2) complex forms which resolves the HJ.</text>
</comment>
<comment type="subcellular location">
    <subcellularLocation>
        <location evidence="1">Cytoplasm</location>
    </subcellularLocation>
</comment>
<comment type="domain">
    <text evidence="1">Has 3 domains, the large (RuvB-L) and small ATPase (RuvB-S) domains and the C-terminal head (RuvB-H) domain. The head domain binds DNA, while the ATPase domains jointly bind ATP, ADP or are empty depending on the state of the subunit in the translocation cycle. During a single DNA translocation step the structure of each domain remains the same, but their relative positions change.</text>
</comment>
<comment type="similarity">
    <text evidence="1">Belongs to the RuvB family.</text>
</comment>
<feature type="chain" id="PRO_1000201850" description="Holliday junction branch migration complex subunit RuvB">
    <location>
        <begin position="1"/>
        <end position="337"/>
    </location>
</feature>
<feature type="region of interest" description="Large ATPase domain (RuvB-L)" evidence="1">
    <location>
        <begin position="4"/>
        <end position="184"/>
    </location>
</feature>
<feature type="region of interest" description="Small ATPAse domain (RuvB-S)" evidence="1">
    <location>
        <begin position="185"/>
        <end position="255"/>
    </location>
</feature>
<feature type="region of interest" description="Head domain (RuvB-H)" evidence="1">
    <location>
        <begin position="258"/>
        <end position="337"/>
    </location>
</feature>
<feature type="binding site" evidence="1">
    <location>
        <position position="23"/>
    </location>
    <ligand>
        <name>ATP</name>
        <dbReference type="ChEBI" id="CHEBI:30616"/>
    </ligand>
</feature>
<feature type="binding site" evidence="1">
    <location>
        <position position="24"/>
    </location>
    <ligand>
        <name>ATP</name>
        <dbReference type="ChEBI" id="CHEBI:30616"/>
    </ligand>
</feature>
<feature type="binding site" evidence="1">
    <location>
        <position position="65"/>
    </location>
    <ligand>
        <name>ATP</name>
        <dbReference type="ChEBI" id="CHEBI:30616"/>
    </ligand>
</feature>
<feature type="binding site" evidence="1">
    <location>
        <position position="68"/>
    </location>
    <ligand>
        <name>ATP</name>
        <dbReference type="ChEBI" id="CHEBI:30616"/>
    </ligand>
</feature>
<feature type="binding site" evidence="1">
    <location>
        <position position="69"/>
    </location>
    <ligand>
        <name>ATP</name>
        <dbReference type="ChEBI" id="CHEBI:30616"/>
    </ligand>
</feature>
<feature type="binding site" evidence="1">
    <location>
        <position position="69"/>
    </location>
    <ligand>
        <name>Mg(2+)</name>
        <dbReference type="ChEBI" id="CHEBI:18420"/>
    </ligand>
</feature>
<feature type="binding site" evidence="1">
    <location>
        <position position="70"/>
    </location>
    <ligand>
        <name>ATP</name>
        <dbReference type="ChEBI" id="CHEBI:30616"/>
    </ligand>
</feature>
<feature type="binding site" evidence="1">
    <location>
        <begin position="131"/>
        <end position="133"/>
    </location>
    <ligand>
        <name>ATP</name>
        <dbReference type="ChEBI" id="CHEBI:30616"/>
    </ligand>
</feature>
<feature type="binding site" evidence="1">
    <location>
        <position position="174"/>
    </location>
    <ligand>
        <name>ATP</name>
        <dbReference type="ChEBI" id="CHEBI:30616"/>
    </ligand>
</feature>
<feature type="binding site" evidence="1">
    <location>
        <position position="184"/>
    </location>
    <ligand>
        <name>ATP</name>
        <dbReference type="ChEBI" id="CHEBI:30616"/>
    </ligand>
</feature>
<feature type="binding site" evidence="1">
    <location>
        <position position="221"/>
    </location>
    <ligand>
        <name>ATP</name>
        <dbReference type="ChEBI" id="CHEBI:30616"/>
    </ligand>
</feature>
<feature type="binding site" evidence="1">
    <location>
        <position position="313"/>
    </location>
    <ligand>
        <name>DNA</name>
        <dbReference type="ChEBI" id="CHEBI:16991"/>
    </ligand>
</feature>
<feature type="binding site" evidence="1">
    <location>
        <position position="318"/>
    </location>
    <ligand>
        <name>DNA</name>
        <dbReference type="ChEBI" id="CHEBI:16991"/>
    </ligand>
</feature>
<evidence type="ECO:0000255" key="1">
    <source>
        <dbReference type="HAMAP-Rule" id="MF_00016"/>
    </source>
</evidence>
<keyword id="KW-0067">ATP-binding</keyword>
<keyword id="KW-0963">Cytoplasm</keyword>
<keyword id="KW-0227">DNA damage</keyword>
<keyword id="KW-0233">DNA recombination</keyword>
<keyword id="KW-0234">DNA repair</keyword>
<keyword id="KW-0238">DNA-binding</keyword>
<keyword id="KW-0378">Hydrolase</keyword>
<keyword id="KW-0547">Nucleotide-binding</keyword>
<keyword id="KW-1185">Reference proteome</keyword>
<organism>
    <name type="scientific">Tolumonas auensis (strain DSM 9187 / NBRC 110442 / TA 4)</name>
    <dbReference type="NCBI Taxonomy" id="595494"/>
    <lineage>
        <taxon>Bacteria</taxon>
        <taxon>Pseudomonadati</taxon>
        <taxon>Pseudomonadota</taxon>
        <taxon>Gammaproteobacteria</taxon>
        <taxon>Aeromonadales</taxon>
        <taxon>Aeromonadaceae</taxon>
        <taxon>Tolumonas</taxon>
    </lineage>
</organism>
<accession>C4LBN0</accession>
<sequence length="337" mass="37298">MIEADRLIAPAAITEEEQLDRAIRPKMLSDYRGQDQVRSQMEIFIEAARRRSEALDHVLIFGPPGLGKTTLANIVANEMGVNIKTTSGPVLEKAGDLAALLTNLEPHDVLFIDEIHRLSPVVEEVLYPAMEDYQLDIMIGEGPAARSIKLELPPFTLIGATTRAGSLTSPLRDRFGIVQRLEFYKVEDLAHIVGRSADVLGLSLDQQGAFEIAKRARGTPRIANRLLRRVRDFAEIRSDGHISDQIAAQALDMLDVDNAGFDYMDRKLLLAIIDKFLGGPVGVDNLAAAIGEEKETIEDVLEPYLIQQGFLQRTPRGRIATPRAYLHFGLTTPERQG</sequence>
<proteinExistence type="inferred from homology"/>
<reference key="1">
    <citation type="submission" date="2009-05" db="EMBL/GenBank/DDBJ databases">
        <title>Complete sequence of Tolumonas auensis DSM 9187.</title>
        <authorList>
            <consortium name="US DOE Joint Genome Institute"/>
            <person name="Lucas S."/>
            <person name="Copeland A."/>
            <person name="Lapidus A."/>
            <person name="Glavina del Rio T."/>
            <person name="Tice H."/>
            <person name="Bruce D."/>
            <person name="Goodwin L."/>
            <person name="Pitluck S."/>
            <person name="Chertkov O."/>
            <person name="Brettin T."/>
            <person name="Detter J.C."/>
            <person name="Han C."/>
            <person name="Larimer F."/>
            <person name="Land M."/>
            <person name="Hauser L."/>
            <person name="Kyrpides N."/>
            <person name="Mikhailova N."/>
            <person name="Spring S."/>
            <person name="Beller H."/>
        </authorList>
    </citation>
    <scope>NUCLEOTIDE SEQUENCE [LARGE SCALE GENOMIC DNA]</scope>
    <source>
        <strain>DSM 9187 / NBRC 110442 / TA 4</strain>
    </source>
</reference>
<name>RUVB_TOLAT</name>
<dbReference type="EC" id="3.6.4.-" evidence="1"/>
<dbReference type="EMBL" id="CP001616">
    <property type="protein sequence ID" value="ACQ94304.1"/>
    <property type="molecule type" value="Genomic_DNA"/>
</dbReference>
<dbReference type="RefSeq" id="WP_015879753.1">
    <property type="nucleotide sequence ID" value="NC_012691.1"/>
</dbReference>
<dbReference type="SMR" id="C4LBN0"/>
<dbReference type="STRING" id="595494.Tola_2711"/>
<dbReference type="KEGG" id="tau:Tola_2711"/>
<dbReference type="eggNOG" id="COG2255">
    <property type="taxonomic scope" value="Bacteria"/>
</dbReference>
<dbReference type="HOGENOM" id="CLU_055599_1_0_6"/>
<dbReference type="OrthoDB" id="9804478at2"/>
<dbReference type="Proteomes" id="UP000009073">
    <property type="component" value="Chromosome"/>
</dbReference>
<dbReference type="GO" id="GO:0005737">
    <property type="term" value="C:cytoplasm"/>
    <property type="evidence" value="ECO:0007669"/>
    <property type="project" value="UniProtKB-SubCell"/>
</dbReference>
<dbReference type="GO" id="GO:0048476">
    <property type="term" value="C:Holliday junction resolvase complex"/>
    <property type="evidence" value="ECO:0007669"/>
    <property type="project" value="UniProtKB-UniRule"/>
</dbReference>
<dbReference type="GO" id="GO:0005524">
    <property type="term" value="F:ATP binding"/>
    <property type="evidence" value="ECO:0007669"/>
    <property type="project" value="UniProtKB-UniRule"/>
</dbReference>
<dbReference type="GO" id="GO:0016887">
    <property type="term" value="F:ATP hydrolysis activity"/>
    <property type="evidence" value="ECO:0007669"/>
    <property type="project" value="InterPro"/>
</dbReference>
<dbReference type="GO" id="GO:0000400">
    <property type="term" value="F:four-way junction DNA binding"/>
    <property type="evidence" value="ECO:0007669"/>
    <property type="project" value="UniProtKB-UniRule"/>
</dbReference>
<dbReference type="GO" id="GO:0009378">
    <property type="term" value="F:four-way junction helicase activity"/>
    <property type="evidence" value="ECO:0007669"/>
    <property type="project" value="InterPro"/>
</dbReference>
<dbReference type="GO" id="GO:0006310">
    <property type="term" value="P:DNA recombination"/>
    <property type="evidence" value="ECO:0007669"/>
    <property type="project" value="UniProtKB-UniRule"/>
</dbReference>
<dbReference type="GO" id="GO:0006281">
    <property type="term" value="P:DNA repair"/>
    <property type="evidence" value="ECO:0007669"/>
    <property type="project" value="UniProtKB-UniRule"/>
</dbReference>
<dbReference type="CDD" id="cd00009">
    <property type="entry name" value="AAA"/>
    <property type="match status" value="1"/>
</dbReference>
<dbReference type="FunFam" id="1.10.10.10:FF:000086">
    <property type="entry name" value="Holliday junction ATP-dependent DNA helicase RuvB"/>
    <property type="match status" value="1"/>
</dbReference>
<dbReference type="FunFam" id="1.10.8.60:FF:000023">
    <property type="entry name" value="Holliday junction ATP-dependent DNA helicase RuvB"/>
    <property type="match status" value="1"/>
</dbReference>
<dbReference type="FunFam" id="3.40.50.300:FF:000073">
    <property type="entry name" value="Holliday junction ATP-dependent DNA helicase RuvB"/>
    <property type="match status" value="1"/>
</dbReference>
<dbReference type="Gene3D" id="1.10.8.60">
    <property type="match status" value="1"/>
</dbReference>
<dbReference type="Gene3D" id="3.40.50.300">
    <property type="entry name" value="P-loop containing nucleotide triphosphate hydrolases"/>
    <property type="match status" value="1"/>
</dbReference>
<dbReference type="Gene3D" id="1.10.10.10">
    <property type="entry name" value="Winged helix-like DNA-binding domain superfamily/Winged helix DNA-binding domain"/>
    <property type="match status" value="1"/>
</dbReference>
<dbReference type="HAMAP" id="MF_00016">
    <property type="entry name" value="DNA_HJ_migration_RuvB"/>
    <property type="match status" value="1"/>
</dbReference>
<dbReference type="InterPro" id="IPR003593">
    <property type="entry name" value="AAA+_ATPase"/>
</dbReference>
<dbReference type="InterPro" id="IPR041445">
    <property type="entry name" value="AAA_lid_4"/>
</dbReference>
<dbReference type="InterPro" id="IPR004605">
    <property type="entry name" value="DNA_helicase_Holl-junc_RuvB"/>
</dbReference>
<dbReference type="InterPro" id="IPR027417">
    <property type="entry name" value="P-loop_NTPase"/>
</dbReference>
<dbReference type="InterPro" id="IPR008824">
    <property type="entry name" value="RuvB-like_N"/>
</dbReference>
<dbReference type="InterPro" id="IPR008823">
    <property type="entry name" value="RuvB_C"/>
</dbReference>
<dbReference type="InterPro" id="IPR036388">
    <property type="entry name" value="WH-like_DNA-bd_sf"/>
</dbReference>
<dbReference type="InterPro" id="IPR036390">
    <property type="entry name" value="WH_DNA-bd_sf"/>
</dbReference>
<dbReference type="NCBIfam" id="NF000868">
    <property type="entry name" value="PRK00080.1"/>
    <property type="match status" value="1"/>
</dbReference>
<dbReference type="NCBIfam" id="TIGR00635">
    <property type="entry name" value="ruvB"/>
    <property type="match status" value="1"/>
</dbReference>
<dbReference type="PANTHER" id="PTHR42848">
    <property type="match status" value="1"/>
</dbReference>
<dbReference type="PANTHER" id="PTHR42848:SF1">
    <property type="entry name" value="HOLLIDAY JUNCTION BRANCH MIGRATION COMPLEX SUBUNIT RUVB"/>
    <property type="match status" value="1"/>
</dbReference>
<dbReference type="Pfam" id="PF17864">
    <property type="entry name" value="AAA_lid_4"/>
    <property type="match status" value="1"/>
</dbReference>
<dbReference type="Pfam" id="PF05491">
    <property type="entry name" value="RuvB_C"/>
    <property type="match status" value="1"/>
</dbReference>
<dbReference type="Pfam" id="PF05496">
    <property type="entry name" value="RuvB_N"/>
    <property type="match status" value="1"/>
</dbReference>
<dbReference type="SMART" id="SM00382">
    <property type="entry name" value="AAA"/>
    <property type="match status" value="1"/>
</dbReference>
<dbReference type="SUPFAM" id="SSF52540">
    <property type="entry name" value="P-loop containing nucleoside triphosphate hydrolases"/>
    <property type="match status" value="1"/>
</dbReference>
<dbReference type="SUPFAM" id="SSF46785">
    <property type="entry name" value="Winged helix' DNA-binding domain"/>
    <property type="match status" value="1"/>
</dbReference>
<protein>
    <recommendedName>
        <fullName evidence="1">Holliday junction branch migration complex subunit RuvB</fullName>
        <ecNumber evidence="1">3.6.4.-</ecNumber>
    </recommendedName>
</protein>